<dbReference type="EC" id="3.1.21.7" evidence="1"/>
<dbReference type="EMBL" id="AP008226">
    <property type="protein sequence ID" value="BAD71170.1"/>
    <property type="molecule type" value="Genomic_DNA"/>
</dbReference>
<dbReference type="RefSeq" id="WP_011173403.1">
    <property type="nucleotide sequence ID" value="NC_006461.1"/>
</dbReference>
<dbReference type="RefSeq" id="YP_144613.1">
    <property type="nucleotide sequence ID" value="NC_006461.1"/>
</dbReference>
<dbReference type="SMR" id="Q5SIM2"/>
<dbReference type="EnsemblBacteria" id="BAD71170">
    <property type="protein sequence ID" value="BAD71170"/>
    <property type="gene ID" value="BAD71170"/>
</dbReference>
<dbReference type="GeneID" id="3168384"/>
<dbReference type="KEGG" id="ttj:TTHA1347"/>
<dbReference type="PATRIC" id="fig|300852.9.peg.1324"/>
<dbReference type="eggNOG" id="COG1515">
    <property type="taxonomic scope" value="Bacteria"/>
</dbReference>
<dbReference type="HOGENOM" id="CLU_047631_1_0_0"/>
<dbReference type="PhylomeDB" id="Q5SIM2"/>
<dbReference type="Proteomes" id="UP000000532">
    <property type="component" value="Chromosome"/>
</dbReference>
<dbReference type="GO" id="GO:0005737">
    <property type="term" value="C:cytoplasm"/>
    <property type="evidence" value="ECO:0007669"/>
    <property type="project" value="UniProtKB-SubCell"/>
</dbReference>
<dbReference type="GO" id="GO:0043737">
    <property type="term" value="F:deoxyribonuclease V activity"/>
    <property type="evidence" value="ECO:0007669"/>
    <property type="project" value="UniProtKB-UniRule"/>
</dbReference>
<dbReference type="GO" id="GO:0000287">
    <property type="term" value="F:magnesium ion binding"/>
    <property type="evidence" value="ECO:0007669"/>
    <property type="project" value="UniProtKB-UniRule"/>
</dbReference>
<dbReference type="GO" id="GO:0016891">
    <property type="term" value="F:RNA endonuclease activity, producing 5'-phosphomonoesters"/>
    <property type="evidence" value="ECO:0007669"/>
    <property type="project" value="TreeGrafter"/>
</dbReference>
<dbReference type="GO" id="GO:0003727">
    <property type="term" value="F:single-stranded RNA binding"/>
    <property type="evidence" value="ECO:0007669"/>
    <property type="project" value="TreeGrafter"/>
</dbReference>
<dbReference type="GO" id="GO:0006281">
    <property type="term" value="P:DNA repair"/>
    <property type="evidence" value="ECO:0007669"/>
    <property type="project" value="UniProtKB-UniRule"/>
</dbReference>
<dbReference type="CDD" id="cd06559">
    <property type="entry name" value="Endonuclease_V"/>
    <property type="match status" value="1"/>
</dbReference>
<dbReference type="Gene3D" id="3.30.2170.10">
    <property type="entry name" value="archaeoglobus fulgidus dsm 4304 superfamily"/>
    <property type="match status" value="1"/>
</dbReference>
<dbReference type="HAMAP" id="MF_00801">
    <property type="entry name" value="Endonuclease_5"/>
    <property type="match status" value="1"/>
</dbReference>
<dbReference type="InterPro" id="IPR007581">
    <property type="entry name" value="Endonuclease-V"/>
</dbReference>
<dbReference type="PANTHER" id="PTHR28511">
    <property type="entry name" value="ENDONUCLEASE V"/>
    <property type="match status" value="1"/>
</dbReference>
<dbReference type="PANTHER" id="PTHR28511:SF1">
    <property type="entry name" value="ENDONUCLEASE V"/>
    <property type="match status" value="1"/>
</dbReference>
<dbReference type="Pfam" id="PF04493">
    <property type="entry name" value="Endonuclease_5"/>
    <property type="match status" value="1"/>
</dbReference>
<proteinExistence type="inferred from homology"/>
<organism>
    <name type="scientific">Thermus thermophilus (strain ATCC 27634 / DSM 579 / HB8)</name>
    <dbReference type="NCBI Taxonomy" id="300852"/>
    <lineage>
        <taxon>Bacteria</taxon>
        <taxon>Thermotogati</taxon>
        <taxon>Deinococcota</taxon>
        <taxon>Deinococci</taxon>
        <taxon>Thermales</taxon>
        <taxon>Thermaceae</taxon>
        <taxon>Thermus</taxon>
    </lineage>
</organism>
<name>NFI_THET8</name>
<reference key="1">
    <citation type="submission" date="2004-11" db="EMBL/GenBank/DDBJ databases">
        <title>Complete genome sequence of Thermus thermophilus HB8.</title>
        <authorList>
            <person name="Masui R."/>
            <person name="Kurokawa K."/>
            <person name="Nakagawa N."/>
            <person name="Tokunaga F."/>
            <person name="Koyama Y."/>
            <person name="Shibata T."/>
            <person name="Oshima T."/>
            <person name="Yokoyama S."/>
            <person name="Yasunaga T."/>
            <person name="Kuramitsu S."/>
        </authorList>
    </citation>
    <scope>NUCLEOTIDE SEQUENCE [LARGE SCALE GENOMIC DNA]</scope>
    <source>
        <strain>ATCC 27634 / DSM 579 / HB8</strain>
    </source>
</reference>
<accession>Q5SIM2</accession>
<comment type="function">
    <text evidence="1">DNA repair enzyme involved in the repair of deaminated bases. Selectively cleaves double-stranded DNA at the second phosphodiester bond 3' to a deoxyinosine leaving behind the intact lesion on the nicked DNA.</text>
</comment>
<comment type="catalytic activity">
    <reaction evidence="1">
        <text>Endonucleolytic cleavage at apurinic or apyrimidinic sites to products with a 5'-phosphate.</text>
        <dbReference type="EC" id="3.1.21.7"/>
    </reaction>
</comment>
<comment type="cofactor">
    <cofactor evidence="1">
        <name>Mg(2+)</name>
        <dbReference type="ChEBI" id="CHEBI:18420"/>
    </cofactor>
</comment>
<comment type="subcellular location">
    <subcellularLocation>
        <location evidence="1">Cytoplasm</location>
    </subcellularLocation>
</comment>
<comment type="similarity">
    <text evidence="1">Belongs to the endonuclease V family.</text>
</comment>
<gene>
    <name evidence="1" type="primary">nfi</name>
    <name type="ordered locus">TTHA1347</name>
</gene>
<protein>
    <recommendedName>
        <fullName evidence="1">Endonuclease V</fullName>
        <ecNumber evidence="1">3.1.21.7</ecNumber>
    </recommendedName>
    <alternativeName>
        <fullName evidence="1">Deoxyinosine 3'endonuclease</fullName>
    </alternativeName>
    <alternativeName>
        <fullName evidence="1">Deoxyribonuclease V</fullName>
        <shortName evidence="1">DNase V</shortName>
    </alternativeName>
</protein>
<sequence>MRPPPFPKPAHPEEALALQRALAKKVRLAGSLEGVRRIAALDASHKRGRPLVAVALLYDLEKGPLHVATALLPEEALFPYVPGLLSFREAPAYLEALAALPEAPEALLVDGQGVAHPRGLGIASHLGVHLDLPSVGVAKRLLYGRPEAPLPEEKGAAVRLLAPDGRPLGYVYRSRTGVKPLYVSPGHRVGLEEALRFVRRLPTRFRLPEPLRLAHLEAGRALKALD</sequence>
<evidence type="ECO:0000255" key="1">
    <source>
        <dbReference type="HAMAP-Rule" id="MF_00801"/>
    </source>
</evidence>
<keyword id="KW-0963">Cytoplasm</keyword>
<keyword id="KW-0227">DNA damage</keyword>
<keyword id="KW-0234">DNA repair</keyword>
<keyword id="KW-0255">Endonuclease</keyword>
<keyword id="KW-0378">Hydrolase</keyword>
<keyword id="KW-0460">Magnesium</keyword>
<keyword id="KW-0479">Metal-binding</keyword>
<keyword id="KW-0540">Nuclease</keyword>
<keyword id="KW-1185">Reference proteome</keyword>
<feature type="chain" id="PRO_0000159676" description="Endonuclease V">
    <location>
        <begin position="1"/>
        <end position="226"/>
    </location>
</feature>
<feature type="binding site" evidence="1">
    <location>
        <position position="42"/>
    </location>
    <ligand>
        <name>Mg(2+)</name>
        <dbReference type="ChEBI" id="CHEBI:18420"/>
    </ligand>
</feature>
<feature type="binding site" evidence="1">
    <location>
        <position position="110"/>
    </location>
    <ligand>
        <name>Mg(2+)</name>
        <dbReference type="ChEBI" id="CHEBI:18420"/>
    </ligand>
</feature>
<feature type="site" description="Interaction with target DNA" evidence="1">
    <location>
        <position position="80"/>
    </location>
</feature>